<comment type="subcellular location">
    <subcellularLocation>
        <location evidence="1">Membrane</location>
        <topology evidence="1">Multi-pass membrane protein</topology>
    </subcellularLocation>
</comment>
<comment type="similarity">
    <text evidence="3">Belongs to the multi antimicrobial extrusion (MATE) (TC 2.A.66.1) family.</text>
</comment>
<comment type="sequence caution" evidence="3">
    <conflict type="erroneous gene model prediction">
        <sequence resource="EMBL-CDS" id="AAD39645"/>
    </conflict>
</comment>
<name>DTX10_ARATH</name>
<organism>
    <name type="scientific">Arabidopsis thaliana</name>
    <name type="common">Mouse-ear cress</name>
    <dbReference type="NCBI Taxonomy" id="3702"/>
    <lineage>
        <taxon>Eukaryota</taxon>
        <taxon>Viridiplantae</taxon>
        <taxon>Streptophyta</taxon>
        <taxon>Embryophyta</taxon>
        <taxon>Tracheophyta</taxon>
        <taxon>Spermatophyta</taxon>
        <taxon>Magnoliopsida</taxon>
        <taxon>eudicotyledons</taxon>
        <taxon>Gunneridae</taxon>
        <taxon>Pentapetalae</taxon>
        <taxon>rosids</taxon>
        <taxon>malvids</taxon>
        <taxon>Brassicales</taxon>
        <taxon>Brassicaceae</taxon>
        <taxon>Camelineae</taxon>
        <taxon>Arabidopsis</taxon>
    </lineage>
</organism>
<reference key="1">
    <citation type="journal article" date="2000" name="Nature">
        <title>Sequence and analysis of chromosome 1 of the plant Arabidopsis thaliana.</title>
        <authorList>
            <person name="Theologis A."/>
            <person name="Ecker J.R."/>
            <person name="Palm C.J."/>
            <person name="Federspiel N.A."/>
            <person name="Kaul S."/>
            <person name="White O."/>
            <person name="Alonso J."/>
            <person name="Altafi H."/>
            <person name="Araujo R."/>
            <person name="Bowman C.L."/>
            <person name="Brooks S.Y."/>
            <person name="Buehler E."/>
            <person name="Chan A."/>
            <person name="Chao Q."/>
            <person name="Chen H."/>
            <person name="Cheuk R.F."/>
            <person name="Chin C.W."/>
            <person name="Chung M.K."/>
            <person name="Conn L."/>
            <person name="Conway A.B."/>
            <person name="Conway A.R."/>
            <person name="Creasy T.H."/>
            <person name="Dewar K."/>
            <person name="Dunn P."/>
            <person name="Etgu P."/>
            <person name="Feldblyum T.V."/>
            <person name="Feng J.-D."/>
            <person name="Fong B."/>
            <person name="Fujii C.Y."/>
            <person name="Gill J.E."/>
            <person name="Goldsmith A.D."/>
            <person name="Haas B."/>
            <person name="Hansen N.F."/>
            <person name="Hughes B."/>
            <person name="Huizar L."/>
            <person name="Hunter J.L."/>
            <person name="Jenkins J."/>
            <person name="Johnson-Hopson C."/>
            <person name="Khan S."/>
            <person name="Khaykin E."/>
            <person name="Kim C.J."/>
            <person name="Koo H.L."/>
            <person name="Kremenetskaia I."/>
            <person name="Kurtz D.B."/>
            <person name="Kwan A."/>
            <person name="Lam B."/>
            <person name="Langin-Hooper S."/>
            <person name="Lee A."/>
            <person name="Lee J.M."/>
            <person name="Lenz C.A."/>
            <person name="Li J.H."/>
            <person name="Li Y.-P."/>
            <person name="Lin X."/>
            <person name="Liu S.X."/>
            <person name="Liu Z.A."/>
            <person name="Luros J.S."/>
            <person name="Maiti R."/>
            <person name="Marziali A."/>
            <person name="Militscher J."/>
            <person name="Miranda M."/>
            <person name="Nguyen M."/>
            <person name="Nierman W.C."/>
            <person name="Osborne B.I."/>
            <person name="Pai G."/>
            <person name="Peterson J."/>
            <person name="Pham P.K."/>
            <person name="Rizzo M."/>
            <person name="Rooney T."/>
            <person name="Rowley D."/>
            <person name="Sakano H."/>
            <person name="Salzberg S.L."/>
            <person name="Schwartz J.R."/>
            <person name="Shinn P."/>
            <person name="Southwick A.M."/>
            <person name="Sun H."/>
            <person name="Tallon L.J."/>
            <person name="Tambunga G."/>
            <person name="Toriumi M.J."/>
            <person name="Town C.D."/>
            <person name="Utterback T."/>
            <person name="Van Aken S."/>
            <person name="Vaysberg M."/>
            <person name="Vysotskaia V.S."/>
            <person name="Walker M."/>
            <person name="Wu D."/>
            <person name="Yu G."/>
            <person name="Fraser C.M."/>
            <person name="Venter J.C."/>
            <person name="Davis R.W."/>
        </authorList>
    </citation>
    <scope>NUCLEOTIDE SEQUENCE [LARGE SCALE GENOMIC DNA]</scope>
    <source>
        <strain>cv. Columbia</strain>
    </source>
</reference>
<reference key="2">
    <citation type="journal article" date="2017" name="Plant J.">
        <title>Araport11: a complete reannotation of the Arabidopsis thaliana reference genome.</title>
        <authorList>
            <person name="Cheng C.Y."/>
            <person name="Krishnakumar V."/>
            <person name="Chan A.P."/>
            <person name="Thibaud-Nissen F."/>
            <person name="Schobel S."/>
            <person name="Town C.D."/>
        </authorList>
    </citation>
    <scope>GENOME REANNOTATION</scope>
    <source>
        <strain>cv. Columbia</strain>
    </source>
</reference>
<reference key="3">
    <citation type="journal article" date="2003" name="Science">
        <title>Empirical analysis of transcriptional activity in the Arabidopsis genome.</title>
        <authorList>
            <person name="Yamada K."/>
            <person name="Lim J."/>
            <person name="Dale J.M."/>
            <person name="Chen H."/>
            <person name="Shinn P."/>
            <person name="Palm C.J."/>
            <person name="Southwick A.M."/>
            <person name="Wu H.C."/>
            <person name="Kim C.J."/>
            <person name="Nguyen M."/>
            <person name="Pham P.K."/>
            <person name="Cheuk R.F."/>
            <person name="Karlin-Newmann G."/>
            <person name="Liu S.X."/>
            <person name="Lam B."/>
            <person name="Sakano H."/>
            <person name="Wu T."/>
            <person name="Yu G."/>
            <person name="Miranda M."/>
            <person name="Quach H.L."/>
            <person name="Tripp M."/>
            <person name="Chang C.H."/>
            <person name="Lee J.M."/>
            <person name="Toriumi M.J."/>
            <person name="Chan M.M."/>
            <person name="Tang C.C."/>
            <person name="Onodera C.S."/>
            <person name="Deng J.M."/>
            <person name="Akiyama K."/>
            <person name="Ansari Y."/>
            <person name="Arakawa T."/>
            <person name="Banh J."/>
            <person name="Banno F."/>
            <person name="Bowser L."/>
            <person name="Brooks S.Y."/>
            <person name="Carninci P."/>
            <person name="Chao Q."/>
            <person name="Choy N."/>
            <person name="Enju A."/>
            <person name="Goldsmith A.D."/>
            <person name="Gurjal M."/>
            <person name="Hansen N.F."/>
            <person name="Hayashizaki Y."/>
            <person name="Johnson-Hopson C."/>
            <person name="Hsuan V.W."/>
            <person name="Iida K."/>
            <person name="Karnes M."/>
            <person name="Khan S."/>
            <person name="Koesema E."/>
            <person name="Ishida J."/>
            <person name="Jiang P.X."/>
            <person name="Jones T."/>
            <person name="Kawai J."/>
            <person name="Kamiya A."/>
            <person name="Meyers C."/>
            <person name="Nakajima M."/>
            <person name="Narusaka M."/>
            <person name="Seki M."/>
            <person name="Sakurai T."/>
            <person name="Satou M."/>
            <person name="Tamse R."/>
            <person name="Vaysberg M."/>
            <person name="Wallender E.K."/>
            <person name="Wong C."/>
            <person name="Yamamura Y."/>
            <person name="Yuan S."/>
            <person name="Shinozaki K."/>
            <person name="Davis R.W."/>
            <person name="Theologis A."/>
            <person name="Ecker J.R."/>
        </authorList>
    </citation>
    <scope>NUCLEOTIDE SEQUENCE [LARGE SCALE MRNA]</scope>
    <source>
        <strain>cv. Columbia</strain>
    </source>
</reference>
<reference key="4">
    <citation type="journal article" date="2002" name="J. Biol. Chem.">
        <title>Functional cloning and characterization of a plant efflux carrier for multidrug and heavy metal detoxification.</title>
        <authorList>
            <person name="Li L."/>
            <person name="He Z."/>
            <person name="Pandey G.K."/>
            <person name="Tsuchiya T."/>
            <person name="Luan S."/>
        </authorList>
    </citation>
    <scope>GENE FAMILY</scope>
    <scope>NOMENCLATURE</scope>
</reference>
<reference key="5">
    <citation type="journal article" date="2003" name="Eur. J. Biochem.">
        <title>The multidrug/oligosaccharidyl-lipid/polysaccharide (MOP) exporter superfamily.</title>
        <authorList>
            <person name="Hvorup R.N."/>
            <person name="Winnen B."/>
            <person name="Chang A.B."/>
            <person name="Jiang Y."/>
            <person name="Zhou X.F."/>
            <person name="Saier M.H. Jr."/>
        </authorList>
    </citation>
    <scope>GENE FAMILY</scope>
</reference>
<sequence length="487" mass="53018">MQDAERTTNDPVDRIEKVTWRDLQDGSFTAELKRLICFAAPMAAVVIIQFMIQIISMVMVGHLGRLSLASASFAVSFCNVTGFSFIIGLSCALDTLSGQAYGAKLYRKLGVQAYTAMFCLTLVCLPLSLLWFNMGKLIVILGQDPAIAHEAGRYAAWLIPGLFAYAVLQPLIRYFKNQSLITPLLVTSSVVFCIHVPLCWLLVYKSGLGHIGGALALSLSYWLYAIFLGSFMYYSSACSETRAPLTMEIFEGVREFIKYALPSAAMLCLEWWSYELIILLSGLLPNPQLETSVLSICFETLSITYSIPLAIAAAASTRISNELGAGNSRAAHIVVYAAMSLAVMDALMVSMSLLAGRHVFGHVFSSDKKTIEYVAKMAPLVSISIILDSLQGVLSGVASGCGWQHIGAYINFGAFYLWGIPIAASLAFWVHLKGVGLWIGILAGAVLQTLLLALVTGCTNWKTQAREARERMAVAHESELTESELPI</sequence>
<feature type="chain" id="PRO_0000434053" description="Protein DETOXIFICATION 10">
    <location>
        <begin position="1"/>
        <end position="487"/>
    </location>
</feature>
<feature type="transmembrane region" description="Helical" evidence="1">
    <location>
        <begin position="35"/>
        <end position="55"/>
    </location>
</feature>
<feature type="transmembrane region" description="Helical" evidence="1">
    <location>
        <begin position="73"/>
        <end position="93"/>
    </location>
</feature>
<feature type="transmembrane region" description="Helical" evidence="1">
    <location>
        <begin position="122"/>
        <end position="142"/>
    </location>
</feature>
<feature type="transmembrane region" description="Helical" evidence="1">
    <location>
        <begin position="155"/>
        <end position="175"/>
    </location>
</feature>
<feature type="transmembrane region" description="Helical" evidence="1">
    <location>
        <begin position="184"/>
        <end position="204"/>
    </location>
</feature>
<feature type="transmembrane region" description="Helical" evidence="1">
    <location>
        <begin position="211"/>
        <end position="231"/>
    </location>
</feature>
<feature type="transmembrane region" description="Helical" evidence="1">
    <location>
        <begin position="264"/>
        <end position="284"/>
    </location>
</feature>
<feature type="transmembrane region" description="Helical" evidence="1">
    <location>
        <begin position="293"/>
        <end position="313"/>
    </location>
</feature>
<feature type="transmembrane region" description="Helical" evidence="1">
    <location>
        <begin position="333"/>
        <end position="353"/>
    </location>
</feature>
<feature type="transmembrane region" description="Helical" evidence="1">
    <location>
        <begin position="377"/>
        <end position="397"/>
    </location>
</feature>
<feature type="transmembrane region" description="Helical" evidence="1">
    <location>
        <begin position="412"/>
        <end position="432"/>
    </location>
</feature>
<feature type="transmembrane region" description="Helical" evidence="1">
    <location>
        <begin position="435"/>
        <end position="455"/>
    </location>
</feature>
<evidence type="ECO:0000255" key="1"/>
<evidence type="ECO:0000303" key="2">
    <source>
    </source>
</evidence>
<evidence type="ECO:0000305" key="3"/>
<evidence type="ECO:0000312" key="4">
    <source>
        <dbReference type="Araport" id="AT1G15150"/>
    </source>
</evidence>
<evidence type="ECO:0000312" key="5">
    <source>
        <dbReference type="EMBL" id="AAD39645.1"/>
    </source>
</evidence>
<proteinExistence type="evidence at transcript level"/>
<protein>
    <recommendedName>
        <fullName evidence="2">Protein DETOXIFICATION 10</fullName>
        <shortName evidence="2">AtDTX10</shortName>
    </recommendedName>
    <alternativeName>
        <fullName evidence="3">Multidrug and toxic compound extrusion protein 10</fullName>
        <shortName evidence="3">MATE protein 10</shortName>
    </alternativeName>
</protein>
<gene>
    <name evidence="2" type="primary">DTX10</name>
    <name evidence="4" type="ordered locus">At1g15150</name>
    <name evidence="5" type="ORF">F9L1.9</name>
</gene>
<keyword id="KW-0472">Membrane</keyword>
<keyword id="KW-1185">Reference proteome</keyword>
<keyword id="KW-0812">Transmembrane</keyword>
<keyword id="KW-1133">Transmembrane helix</keyword>
<keyword id="KW-0813">Transport</keyword>
<accession>Q8VYL8</accession>
<accession>Q9XI54</accession>
<dbReference type="EMBL" id="AC007591">
    <property type="protein sequence ID" value="AAD39645.1"/>
    <property type="status" value="ALT_SEQ"/>
    <property type="molecule type" value="Genomic_DNA"/>
</dbReference>
<dbReference type="EMBL" id="CP002684">
    <property type="protein sequence ID" value="AEE29274.1"/>
    <property type="molecule type" value="Genomic_DNA"/>
</dbReference>
<dbReference type="EMBL" id="AY070445">
    <property type="protein sequence ID" value="AAL49848.1"/>
    <property type="molecule type" value="mRNA"/>
</dbReference>
<dbReference type="EMBL" id="AY117365">
    <property type="protein sequence ID" value="AAM51440.1"/>
    <property type="molecule type" value="mRNA"/>
</dbReference>
<dbReference type="PIR" id="D86285">
    <property type="entry name" value="D86285"/>
</dbReference>
<dbReference type="RefSeq" id="NP_172967.2">
    <property type="nucleotide sequence ID" value="NM_101383.3"/>
</dbReference>
<dbReference type="SMR" id="Q8VYL8"/>
<dbReference type="FunCoup" id="Q8VYL8">
    <property type="interactions" value="323"/>
</dbReference>
<dbReference type="IntAct" id="Q8VYL8">
    <property type="interactions" value="35"/>
</dbReference>
<dbReference type="PaxDb" id="3702-AT1G15150.1"/>
<dbReference type="ProteomicsDB" id="221927"/>
<dbReference type="EnsemblPlants" id="AT1G15150.1">
    <property type="protein sequence ID" value="AT1G15150.1"/>
    <property type="gene ID" value="AT1G15150"/>
</dbReference>
<dbReference type="GeneID" id="838080"/>
<dbReference type="Gramene" id="AT1G15150.1">
    <property type="protein sequence ID" value="AT1G15150.1"/>
    <property type="gene ID" value="AT1G15150"/>
</dbReference>
<dbReference type="KEGG" id="ath:AT1G15150"/>
<dbReference type="Araport" id="AT1G15150"/>
<dbReference type="TAIR" id="AT1G15150"/>
<dbReference type="eggNOG" id="KOG1347">
    <property type="taxonomic scope" value="Eukaryota"/>
</dbReference>
<dbReference type="HOGENOM" id="CLU_012893_1_0_1"/>
<dbReference type="InParanoid" id="Q8VYL8"/>
<dbReference type="OMA" id="YATWRIP"/>
<dbReference type="PhylomeDB" id="Q8VYL8"/>
<dbReference type="PRO" id="PR:Q8VYL8"/>
<dbReference type="Proteomes" id="UP000006548">
    <property type="component" value="Chromosome 1"/>
</dbReference>
<dbReference type="ExpressionAtlas" id="Q8VYL8">
    <property type="expression patterns" value="baseline and differential"/>
</dbReference>
<dbReference type="GO" id="GO:0016020">
    <property type="term" value="C:membrane"/>
    <property type="evidence" value="ECO:0007669"/>
    <property type="project" value="UniProtKB-SubCell"/>
</dbReference>
<dbReference type="GO" id="GO:0015297">
    <property type="term" value="F:antiporter activity"/>
    <property type="evidence" value="ECO:0007669"/>
    <property type="project" value="InterPro"/>
</dbReference>
<dbReference type="GO" id="GO:0042910">
    <property type="term" value="F:xenobiotic transmembrane transporter activity"/>
    <property type="evidence" value="ECO:0007669"/>
    <property type="project" value="InterPro"/>
</dbReference>
<dbReference type="GO" id="GO:1990961">
    <property type="term" value="P:xenobiotic detoxification by transmembrane export across the plasma membrane"/>
    <property type="evidence" value="ECO:0007669"/>
    <property type="project" value="InterPro"/>
</dbReference>
<dbReference type="CDD" id="cd13132">
    <property type="entry name" value="MATE_eukaryotic"/>
    <property type="match status" value="1"/>
</dbReference>
<dbReference type="InterPro" id="IPR045069">
    <property type="entry name" value="MATE_euk"/>
</dbReference>
<dbReference type="InterPro" id="IPR002528">
    <property type="entry name" value="MATE_fam"/>
</dbReference>
<dbReference type="NCBIfam" id="TIGR00797">
    <property type="entry name" value="matE"/>
    <property type="match status" value="1"/>
</dbReference>
<dbReference type="PANTHER" id="PTHR11206">
    <property type="entry name" value="MULTIDRUG RESISTANCE PROTEIN"/>
    <property type="match status" value="1"/>
</dbReference>
<dbReference type="Pfam" id="PF01554">
    <property type="entry name" value="MatE"/>
    <property type="match status" value="2"/>
</dbReference>